<keyword id="KW-1015">Disulfide bond</keyword>
<keyword id="KW-0496">Mitochondrion</keyword>
<keyword id="KW-1185">Reference proteome</keyword>
<keyword id="KW-0809">Transit peptide</keyword>
<name>COX23_ASPCL</name>
<comment type="function">
    <text evidence="2">Required for the assembly of cytochrome c oxidase.</text>
</comment>
<comment type="subcellular location">
    <subcellularLocation>
        <location evidence="1">Mitochondrion intermembrane space</location>
    </subcellularLocation>
</comment>
<comment type="similarity">
    <text evidence="6">Belongs to the COX23 family.</text>
</comment>
<comment type="sequence caution" evidence="6">
    <conflict type="erroneous gene model prediction">
        <sequence resource="EMBL-CDS" id="EAW10212"/>
    </conflict>
</comment>
<evidence type="ECO:0000250" key="1"/>
<evidence type="ECO:0000250" key="2">
    <source>
        <dbReference type="UniProtKB" id="P38824"/>
    </source>
</evidence>
<evidence type="ECO:0000255" key="3"/>
<evidence type="ECO:0000255" key="4">
    <source>
        <dbReference type="PROSITE-ProRule" id="PRU01150"/>
    </source>
</evidence>
<evidence type="ECO:0000256" key="5">
    <source>
        <dbReference type="SAM" id="MobiDB-lite"/>
    </source>
</evidence>
<evidence type="ECO:0000305" key="6"/>
<sequence length="88" mass="10450">MASQSSQADQQQQQQQQSSQSQQPNAWEKAERKFANKNASEYYDPCQDFADRSLKCMKRNAFDKEMCGDYFQAYRDCKKQWLTQKKFS</sequence>
<feature type="transit peptide" description="Mitochondrion" evidence="3">
    <location>
        <begin position="1"/>
        <end status="unknown"/>
    </location>
</feature>
<feature type="chain" id="PRO_0000280656" description="Cytochrome c oxidase-assembly factor cox23, mitochondrial">
    <location>
        <begin status="unknown"/>
        <end position="88"/>
    </location>
</feature>
<feature type="domain" description="CHCH" evidence="4">
    <location>
        <begin position="43"/>
        <end position="85"/>
    </location>
</feature>
<feature type="region of interest" description="Disordered" evidence="5">
    <location>
        <begin position="1"/>
        <end position="31"/>
    </location>
</feature>
<feature type="short sequence motif" description="Cx9C motif 1" evidence="4">
    <location>
        <begin position="46"/>
        <end position="56"/>
    </location>
</feature>
<feature type="short sequence motif" description="Cx9C motif 2" evidence="4">
    <location>
        <begin position="67"/>
        <end position="77"/>
    </location>
</feature>
<feature type="compositionally biased region" description="Low complexity" evidence="5">
    <location>
        <begin position="1"/>
        <end position="23"/>
    </location>
</feature>
<feature type="disulfide bond" evidence="4">
    <location>
        <begin position="46"/>
        <end position="77"/>
    </location>
</feature>
<feature type="disulfide bond" evidence="4">
    <location>
        <begin position="56"/>
        <end position="67"/>
    </location>
</feature>
<dbReference type="EMBL" id="DS027054">
    <property type="protein sequence ID" value="EAW10212.1"/>
    <property type="status" value="ALT_SEQ"/>
    <property type="molecule type" value="Genomic_DNA"/>
</dbReference>
<dbReference type="RefSeq" id="XP_001271638.1">
    <property type="nucleotide sequence ID" value="XM_001271637.1"/>
</dbReference>
<dbReference type="SMR" id="A1CH57"/>
<dbReference type="STRING" id="344612.A1CH57"/>
<dbReference type="GeneID" id="4704404"/>
<dbReference type="KEGG" id="act:ACLA_046780"/>
<dbReference type="OrthoDB" id="9971592at2759"/>
<dbReference type="Proteomes" id="UP000006701">
    <property type="component" value="Unassembled WGS sequence"/>
</dbReference>
<dbReference type="GO" id="GO:0005758">
    <property type="term" value="C:mitochondrial intermembrane space"/>
    <property type="evidence" value="ECO:0007669"/>
    <property type="project" value="UniProtKB-SubCell"/>
</dbReference>
<dbReference type="GO" id="GO:0033108">
    <property type="term" value="P:mitochondrial respiratory chain complex assembly"/>
    <property type="evidence" value="ECO:0007669"/>
    <property type="project" value="TreeGrafter"/>
</dbReference>
<dbReference type="Gene3D" id="1.10.287.1130">
    <property type="entry name" value="CytochromE C oxidase copper chaperone"/>
    <property type="match status" value="1"/>
</dbReference>
<dbReference type="InterPro" id="IPR051040">
    <property type="entry name" value="COX23"/>
</dbReference>
<dbReference type="InterPro" id="IPR009069">
    <property type="entry name" value="Cys_alpha_HP_mot_SF"/>
</dbReference>
<dbReference type="PANTHER" id="PTHR46811">
    <property type="entry name" value="COILED-COIL-HELIX-COILED-COIL-HELIX DOMAIN-CONTAINING PROTEIN 7"/>
    <property type="match status" value="1"/>
</dbReference>
<dbReference type="PANTHER" id="PTHR46811:SF1">
    <property type="entry name" value="COILED-COIL-HELIX-COILED-COIL-HELIX DOMAIN-CONTAINING PROTEIN 7"/>
    <property type="match status" value="1"/>
</dbReference>
<dbReference type="SUPFAM" id="SSF47072">
    <property type="entry name" value="Cysteine alpha-hairpin motif"/>
    <property type="match status" value="1"/>
</dbReference>
<dbReference type="PROSITE" id="PS51808">
    <property type="entry name" value="CHCH"/>
    <property type="match status" value="1"/>
</dbReference>
<proteinExistence type="inferred from homology"/>
<organism>
    <name type="scientific">Aspergillus clavatus (strain ATCC 1007 / CBS 513.65 / DSM 816 / NCTC 3887 / NRRL 1 / QM 1276 / 107)</name>
    <dbReference type="NCBI Taxonomy" id="344612"/>
    <lineage>
        <taxon>Eukaryota</taxon>
        <taxon>Fungi</taxon>
        <taxon>Dikarya</taxon>
        <taxon>Ascomycota</taxon>
        <taxon>Pezizomycotina</taxon>
        <taxon>Eurotiomycetes</taxon>
        <taxon>Eurotiomycetidae</taxon>
        <taxon>Eurotiales</taxon>
        <taxon>Aspergillaceae</taxon>
        <taxon>Aspergillus</taxon>
        <taxon>Aspergillus subgen. Fumigati</taxon>
    </lineage>
</organism>
<protein>
    <recommendedName>
        <fullName>Cytochrome c oxidase-assembly factor cox23, mitochondrial</fullName>
    </recommendedName>
</protein>
<gene>
    <name type="primary">cox23</name>
    <name type="ORF">ACLA_046780</name>
</gene>
<reference key="1">
    <citation type="journal article" date="2008" name="PLoS Genet.">
        <title>Genomic islands in the pathogenic filamentous fungus Aspergillus fumigatus.</title>
        <authorList>
            <person name="Fedorova N.D."/>
            <person name="Khaldi N."/>
            <person name="Joardar V.S."/>
            <person name="Maiti R."/>
            <person name="Amedeo P."/>
            <person name="Anderson M.J."/>
            <person name="Crabtree J."/>
            <person name="Silva J.C."/>
            <person name="Badger J.H."/>
            <person name="Albarraq A."/>
            <person name="Angiuoli S."/>
            <person name="Bussey H."/>
            <person name="Bowyer P."/>
            <person name="Cotty P.J."/>
            <person name="Dyer P.S."/>
            <person name="Egan A."/>
            <person name="Galens K."/>
            <person name="Fraser-Liggett C.M."/>
            <person name="Haas B.J."/>
            <person name="Inman J.M."/>
            <person name="Kent R."/>
            <person name="Lemieux S."/>
            <person name="Malavazi I."/>
            <person name="Orvis J."/>
            <person name="Roemer T."/>
            <person name="Ronning C.M."/>
            <person name="Sundaram J.P."/>
            <person name="Sutton G."/>
            <person name="Turner G."/>
            <person name="Venter J.C."/>
            <person name="White O.R."/>
            <person name="Whitty B.R."/>
            <person name="Youngman P."/>
            <person name="Wolfe K.H."/>
            <person name="Goldman G.H."/>
            <person name="Wortman J.R."/>
            <person name="Jiang B."/>
            <person name="Denning D.W."/>
            <person name="Nierman W.C."/>
        </authorList>
    </citation>
    <scope>NUCLEOTIDE SEQUENCE [LARGE SCALE GENOMIC DNA]</scope>
    <source>
        <strain>ATCC 1007 / CBS 513.65 / DSM 816 / NCTC 3887 / NRRL 1 / QM 1276 / 107</strain>
    </source>
</reference>
<accession>A1CH57</accession>